<name>Y068_CHLTR</name>
<feature type="chain" id="PRO_0000093231" description="Probable metal transport system ATP-binding protein CT_068">
    <location>
        <begin position="1"/>
        <end position="259"/>
    </location>
</feature>
<feature type="domain" description="ABC transporter" evidence="1">
    <location>
        <begin position="9"/>
        <end position="241"/>
    </location>
</feature>
<feature type="binding site" evidence="1">
    <location>
        <begin position="41"/>
        <end position="48"/>
    </location>
    <ligand>
        <name>ATP</name>
        <dbReference type="ChEBI" id="CHEBI:30616"/>
    </ligand>
</feature>
<proteinExistence type="inferred from homology"/>
<evidence type="ECO:0000255" key="1">
    <source>
        <dbReference type="PROSITE-ProRule" id="PRU00434"/>
    </source>
</evidence>
<evidence type="ECO:0000305" key="2"/>
<accession>O84071</accession>
<dbReference type="EMBL" id="AE001273">
    <property type="protein sequence ID" value="AAC67659.1"/>
    <property type="molecule type" value="Genomic_DNA"/>
</dbReference>
<dbReference type="PIR" id="F71561">
    <property type="entry name" value="F71561"/>
</dbReference>
<dbReference type="RefSeq" id="WP_009872357.1">
    <property type="nucleotide sequence ID" value="NC_000117.1"/>
</dbReference>
<dbReference type="SMR" id="O84071"/>
<dbReference type="FunCoup" id="O84071">
    <property type="interactions" value="63"/>
</dbReference>
<dbReference type="STRING" id="272561.CT_068"/>
<dbReference type="TCDB" id="3.A.1.15.12">
    <property type="family name" value="the atp-binding cassette (abc) superfamily"/>
</dbReference>
<dbReference type="EnsemblBacteria" id="AAC67659">
    <property type="protein sequence ID" value="AAC67659"/>
    <property type="gene ID" value="CT_068"/>
</dbReference>
<dbReference type="KEGG" id="ctr:CT_068"/>
<dbReference type="PATRIC" id="fig|272561.5.peg.77"/>
<dbReference type="HOGENOM" id="CLU_000604_1_11_0"/>
<dbReference type="InParanoid" id="O84071"/>
<dbReference type="OrthoDB" id="9806726at2"/>
<dbReference type="Proteomes" id="UP000000431">
    <property type="component" value="Chromosome"/>
</dbReference>
<dbReference type="GO" id="GO:0043190">
    <property type="term" value="C:ATP-binding cassette (ABC) transporter complex"/>
    <property type="evidence" value="ECO:0000318"/>
    <property type="project" value="GO_Central"/>
</dbReference>
<dbReference type="GO" id="GO:0005524">
    <property type="term" value="F:ATP binding"/>
    <property type="evidence" value="ECO:0007669"/>
    <property type="project" value="UniProtKB-KW"/>
</dbReference>
<dbReference type="GO" id="GO:0016887">
    <property type="term" value="F:ATP hydrolysis activity"/>
    <property type="evidence" value="ECO:0007669"/>
    <property type="project" value="InterPro"/>
</dbReference>
<dbReference type="GO" id="GO:0042626">
    <property type="term" value="F:ATPase-coupled transmembrane transporter activity"/>
    <property type="evidence" value="ECO:0000318"/>
    <property type="project" value="GO_Central"/>
</dbReference>
<dbReference type="CDD" id="cd03235">
    <property type="entry name" value="ABC_Metallic_Cations"/>
    <property type="match status" value="1"/>
</dbReference>
<dbReference type="FunFam" id="3.40.50.300:FF:000134">
    <property type="entry name" value="Iron-enterobactin ABC transporter ATP-binding protein"/>
    <property type="match status" value="1"/>
</dbReference>
<dbReference type="Gene3D" id="3.40.50.300">
    <property type="entry name" value="P-loop containing nucleotide triphosphate hydrolases"/>
    <property type="match status" value="1"/>
</dbReference>
<dbReference type="InterPro" id="IPR003593">
    <property type="entry name" value="AAA+_ATPase"/>
</dbReference>
<dbReference type="InterPro" id="IPR003439">
    <property type="entry name" value="ABC_transporter-like_ATP-bd"/>
</dbReference>
<dbReference type="InterPro" id="IPR017871">
    <property type="entry name" value="ABC_transporter-like_CS"/>
</dbReference>
<dbReference type="InterPro" id="IPR050153">
    <property type="entry name" value="Metal_Ion_Import_ABC"/>
</dbReference>
<dbReference type="InterPro" id="IPR027417">
    <property type="entry name" value="P-loop_NTPase"/>
</dbReference>
<dbReference type="PANTHER" id="PTHR42734:SF5">
    <property type="entry name" value="IRON TRANSPORT SYSTEM ATP-BINDING PROTEIN HI_0361-RELATED"/>
    <property type="match status" value="1"/>
</dbReference>
<dbReference type="PANTHER" id="PTHR42734">
    <property type="entry name" value="METAL TRANSPORT SYSTEM ATP-BINDING PROTEIN TM_0124-RELATED"/>
    <property type="match status" value="1"/>
</dbReference>
<dbReference type="Pfam" id="PF00005">
    <property type="entry name" value="ABC_tran"/>
    <property type="match status" value="1"/>
</dbReference>
<dbReference type="SMART" id="SM00382">
    <property type="entry name" value="AAA"/>
    <property type="match status" value="1"/>
</dbReference>
<dbReference type="SUPFAM" id="SSF52540">
    <property type="entry name" value="P-loop containing nucleoside triphosphate hydrolases"/>
    <property type="match status" value="1"/>
</dbReference>
<dbReference type="PROSITE" id="PS00211">
    <property type="entry name" value="ABC_TRANSPORTER_1"/>
    <property type="match status" value="1"/>
</dbReference>
<dbReference type="PROSITE" id="PS50893">
    <property type="entry name" value="ABC_TRANSPORTER_2"/>
    <property type="match status" value="1"/>
</dbReference>
<organism>
    <name type="scientific">Chlamydia trachomatis serovar D (strain ATCC VR-885 / DSM 19411 / UW-3/Cx)</name>
    <dbReference type="NCBI Taxonomy" id="272561"/>
    <lineage>
        <taxon>Bacteria</taxon>
        <taxon>Pseudomonadati</taxon>
        <taxon>Chlamydiota</taxon>
        <taxon>Chlamydiia</taxon>
        <taxon>Chlamydiales</taxon>
        <taxon>Chlamydiaceae</taxon>
        <taxon>Chlamydia/Chlamydophila group</taxon>
        <taxon>Chlamydia</taxon>
    </lineage>
</organism>
<gene>
    <name type="ordered locus">CT_068</name>
</gene>
<protein>
    <recommendedName>
        <fullName>Probable metal transport system ATP-binding protein CT_068</fullName>
    </recommendedName>
</protein>
<keyword id="KW-0067">ATP-binding</keyword>
<keyword id="KW-0997">Cell inner membrane</keyword>
<keyword id="KW-1003">Cell membrane</keyword>
<keyword id="KW-0472">Membrane</keyword>
<keyword id="KW-0547">Nucleotide-binding</keyword>
<keyword id="KW-1185">Reference proteome</keyword>
<keyword id="KW-0813">Transport</keyword>
<reference key="1">
    <citation type="journal article" date="1998" name="Science">
        <title>Genome sequence of an obligate intracellular pathogen of humans: Chlamydia trachomatis.</title>
        <authorList>
            <person name="Stephens R.S."/>
            <person name="Kalman S."/>
            <person name="Lammel C.J."/>
            <person name="Fan J."/>
            <person name="Marathe R."/>
            <person name="Aravind L."/>
            <person name="Mitchell W.P."/>
            <person name="Olinger L."/>
            <person name="Tatusov R.L."/>
            <person name="Zhao Q."/>
            <person name="Koonin E.V."/>
            <person name="Davis R.W."/>
        </authorList>
    </citation>
    <scope>NUCLEOTIDE SEQUENCE [LARGE SCALE GENOMIC DNA]</scope>
    <source>
        <strain>ATCC VR-885 / DSM 19411 / UW-3/Cx</strain>
    </source>
</reference>
<sequence>MNRDNAIAWSVEDLCVNYDHSDVLCHITFSLPAGAMAAIIGPNGAGKSTLLKASLGLIRASSGQSLFFGQRFSKVHHRIAYMPQRASVDWDFPMTVLDLVLMGCYGYKGIWNRISTDDRQEAMRILERVGLEAFANRQIGKLSGGQQQRAFLARSLMQKADLYLMDELFSAIDMASYQMVVDVLQELKSEGKTIVVIHHDLSNVRKLFDHVILLNKHLVCSGSVEECLTKEAIFQAYGCELELLDYTLKLSRGKYQGSC</sequence>
<comment type="function">
    <text>Part of an ATP-driven transport system CT_067/CT_068/CT_069/CT_070 for a metal. Probably responsible for energy coupling to the transport system.</text>
</comment>
<comment type="subcellular location">
    <subcellularLocation>
        <location evidence="2">Cell inner membrane</location>
        <topology evidence="2">Peripheral membrane protein</topology>
    </subcellularLocation>
</comment>
<comment type="similarity">
    <text evidence="2">Belongs to the ABC transporter superfamily.</text>
</comment>